<feature type="chain" id="PRO_0000126544" description="Small ribosomal subunit protein uS8">
    <location>
        <begin position="1"/>
        <end position="130"/>
    </location>
</feature>
<dbReference type="EMBL" id="AE000666">
    <property type="protein sequence ID" value="AAB84519.1"/>
    <property type="status" value="ALT_INIT"/>
    <property type="molecule type" value="Genomic_DNA"/>
</dbReference>
<dbReference type="PIR" id="D69107">
    <property type="entry name" value="D69107"/>
</dbReference>
<dbReference type="RefSeq" id="WP_048060728.1">
    <property type="nucleotide sequence ID" value="NC_000916.1"/>
</dbReference>
<dbReference type="SMR" id="O26126"/>
<dbReference type="FunCoup" id="O26126">
    <property type="interactions" value="159"/>
</dbReference>
<dbReference type="STRING" id="187420.MTH_18"/>
<dbReference type="PaxDb" id="187420-MTH_18"/>
<dbReference type="EnsemblBacteria" id="AAB84519">
    <property type="protein sequence ID" value="AAB84519"/>
    <property type="gene ID" value="MTH_18"/>
</dbReference>
<dbReference type="KEGG" id="mth:MTH_18"/>
<dbReference type="PATRIC" id="fig|187420.15.peg.18"/>
<dbReference type="HOGENOM" id="CLU_098428_1_1_2"/>
<dbReference type="InParanoid" id="O26126"/>
<dbReference type="Proteomes" id="UP000005223">
    <property type="component" value="Chromosome"/>
</dbReference>
<dbReference type="GO" id="GO:1990904">
    <property type="term" value="C:ribonucleoprotein complex"/>
    <property type="evidence" value="ECO:0007669"/>
    <property type="project" value="UniProtKB-KW"/>
</dbReference>
<dbReference type="GO" id="GO:0005840">
    <property type="term" value="C:ribosome"/>
    <property type="evidence" value="ECO:0007669"/>
    <property type="project" value="UniProtKB-KW"/>
</dbReference>
<dbReference type="GO" id="GO:0019843">
    <property type="term" value="F:rRNA binding"/>
    <property type="evidence" value="ECO:0007669"/>
    <property type="project" value="UniProtKB-UniRule"/>
</dbReference>
<dbReference type="GO" id="GO:0003735">
    <property type="term" value="F:structural constituent of ribosome"/>
    <property type="evidence" value="ECO:0007669"/>
    <property type="project" value="InterPro"/>
</dbReference>
<dbReference type="GO" id="GO:0006412">
    <property type="term" value="P:translation"/>
    <property type="evidence" value="ECO:0007669"/>
    <property type="project" value="UniProtKB-UniRule"/>
</dbReference>
<dbReference type="FunFam" id="3.30.1370.30:FF:000001">
    <property type="entry name" value="40S ribosomal protein S15a"/>
    <property type="match status" value="1"/>
</dbReference>
<dbReference type="FunFam" id="3.30.1490.10:FF:000002">
    <property type="entry name" value="40S ribosomal protein S15a"/>
    <property type="match status" value="1"/>
</dbReference>
<dbReference type="Gene3D" id="3.30.1370.30">
    <property type="match status" value="1"/>
</dbReference>
<dbReference type="Gene3D" id="3.30.1490.10">
    <property type="match status" value="1"/>
</dbReference>
<dbReference type="HAMAP" id="MF_01302_A">
    <property type="entry name" value="Ribosomal_uS8_A"/>
    <property type="match status" value="1"/>
</dbReference>
<dbReference type="InterPro" id="IPR000630">
    <property type="entry name" value="Ribosomal_uS8"/>
</dbReference>
<dbReference type="InterPro" id="IPR047863">
    <property type="entry name" value="Ribosomal_uS8_CS"/>
</dbReference>
<dbReference type="InterPro" id="IPR035987">
    <property type="entry name" value="Ribosomal_uS8_sf"/>
</dbReference>
<dbReference type="NCBIfam" id="NF003115">
    <property type="entry name" value="PRK04034.1"/>
    <property type="match status" value="1"/>
</dbReference>
<dbReference type="PANTHER" id="PTHR11758">
    <property type="entry name" value="40S RIBOSOMAL PROTEIN S15A"/>
    <property type="match status" value="1"/>
</dbReference>
<dbReference type="Pfam" id="PF00410">
    <property type="entry name" value="Ribosomal_S8"/>
    <property type="match status" value="1"/>
</dbReference>
<dbReference type="SUPFAM" id="SSF56047">
    <property type="entry name" value="Ribosomal protein S8"/>
    <property type="match status" value="1"/>
</dbReference>
<dbReference type="PROSITE" id="PS00053">
    <property type="entry name" value="RIBOSOMAL_S8"/>
    <property type="match status" value="1"/>
</dbReference>
<keyword id="KW-1185">Reference proteome</keyword>
<keyword id="KW-0687">Ribonucleoprotein</keyword>
<keyword id="KW-0689">Ribosomal protein</keyword>
<keyword id="KW-0694">RNA-binding</keyword>
<keyword id="KW-0699">rRNA-binding</keyword>
<accession>O26126</accession>
<comment type="function">
    <text evidence="1">One of the primary rRNA binding proteins, it binds directly to 16S rRNA central domain where it helps coordinate assembly of the platform of the 30S subunit.</text>
</comment>
<comment type="subunit">
    <text evidence="1">Part of the 30S ribosomal subunit.</text>
</comment>
<comment type="similarity">
    <text evidence="1">Belongs to the universal ribosomal protein uS8 family.</text>
</comment>
<comment type="sequence caution" evidence="2">
    <conflict type="erroneous initiation">
        <sequence resource="EMBL-CDS" id="AAB84519"/>
    </conflict>
    <text>Extended N-terminus.</text>
</comment>
<proteinExistence type="inferred from homology"/>
<name>RS8_METTH</name>
<organism>
    <name type="scientific">Methanothermobacter thermautotrophicus (strain ATCC 29096 / DSM 1053 / JCM 10044 / NBRC 100330 / Delta H)</name>
    <name type="common">Methanobacterium thermoautotrophicum</name>
    <dbReference type="NCBI Taxonomy" id="187420"/>
    <lineage>
        <taxon>Archaea</taxon>
        <taxon>Methanobacteriati</taxon>
        <taxon>Methanobacteriota</taxon>
        <taxon>Methanomada group</taxon>
        <taxon>Methanobacteria</taxon>
        <taxon>Methanobacteriales</taxon>
        <taxon>Methanobacteriaceae</taxon>
        <taxon>Methanothermobacter</taxon>
    </lineage>
</organism>
<gene>
    <name evidence="1" type="primary">rps8</name>
    <name type="ordered locus">MTH_18</name>
</gene>
<reference key="1">
    <citation type="journal article" date="1997" name="J. Bacteriol.">
        <title>Complete genome sequence of Methanobacterium thermoautotrophicum deltaH: functional analysis and comparative genomics.</title>
        <authorList>
            <person name="Smith D.R."/>
            <person name="Doucette-Stamm L.A."/>
            <person name="Deloughery C."/>
            <person name="Lee H.-M."/>
            <person name="Dubois J."/>
            <person name="Aldredge T."/>
            <person name="Bashirzadeh R."/>
            <person name="Blakely D."/>
            <person name="Cook R."/>
            <person name="Gilbert K."/>
            <person name="Harrison D."/>
            <person name="Hoang L."/>
            <person name="Keagle P."/>
            <person name="Lumm W."/>
            <person name="Pothier B."/>
            <person name="Qiu D."/>
            <person name="Spadafora R."/>
            <person name="Vicare R."/>
            <person name="Wang Y."/>
            <person name="Wierzbowski J."/>
            <person name="Gibson R."/>
            <person name="Jiwani N."/>
            <person name="Caruso A."/>
            <person name="Bush D."/>
            <person name="Safer H."/>
            <person name="Patwell D."/>
            <person name="Prabhakar S."/>
            <person name="McDougall S."/>
            <person name="Shimer G."/>
            <person name="Goyal A."/>
            <person name="Pietrovski S."/>
            <person name="Church G.M."/>
            <person name="Daniels C.J."/>
            <person name="Mao J.-I."/>
            <person name="Rice P."/>
            <person name="Noelling J."/>
            <person name="Reeve J.N."/>
        </authorList>
    </citation>
    <scope>NUCLEOTIDE SEQUENCE [LARGE SCALE GENOMIC DNA]</scope>
    <source>
        <strain>ATCC 29096 / DSM 1053 / JCM 10044 / NBRC 100330 / Delta H</strain>
    </source>
</reference>
<evidence type="ECO:0000255" key="1">
    <source>
        <dbReference type="HAMAP-Rule" id="MF_01302"/>
    </source>
</evidence>
<evidence type="ECO:0000305" key="2"/>
<protein>
    <recommendedName>
        <fullName evidence="1">Small ribosomal subunit protein uS8</fullName>
    </recommendedName>
    <alternativeName>
        <fullName evidence="2">30S ribosomal protein S8</fullName>
    </alternativeName>
</protein>
<sequence>MTLMDPLANALTNIRNNEIRGNVKCRITPASKLIGRVLRTMQKEGYIGEFEYVDDGRAGKFIVELEGNINHCGVIKPRHAVKKDEFEKFEKRYLPAKNFGIIIVSTPEGIMTHKEAKDRGIGGRLLAYVY</sequence>